<name>VE1_PAPVE</name>
<proteinExistence type="inferred from homology"/>
<comment type="function">
    <text evidence="1">ATP-dependent DNA 3'-5' helicase required for initiation of viral DNA replication. It forms a complex with the viral E2 protein. The E1-E2 complex binds to the replication origin which contains binding sites for both proteins. During the initial step, a dimer of E1 interacts with a dimer of protein E2 leading to a complex that binds the viral origin of replication with high specificity. Then, a second dimer of E1 displaces the E2 dimer in an ATP-dependent manner to form the E1 tetramer. Following this, two E1 monomers are added to each half of the site, which results in the formation of two E1 trimers on the viral ori. Subsequently, two hexamers will be created. The double hexamer acts as a bi-directional helicase machinery and unwinds the viral DNA and then recruits the host DNA polymerase to start replication.</text>
</comment>
<comment type="catalytic activity">
    <reaction evidence="1">
        <text>Couples ATP hydrolysis with the unwinding of duplex DNA by translocating in the 3'-5' direction.</text>
        <dbReference type="EC" id="5.6.2.4"/>
    </reaction>
</comment>
<comment type="catalytic activity">
    <reaction evidence="1">
        <text>ATP + H2O = ADP + phosphate + H(+)</text>
        <dbReference type="Rhea" id="RHEA:13065"/>
        <dbReference type="ChEBI" id="CHEBI:15377"/>
        <dbReference type="ChEBI" id="CHEBI:15378"/>
        <dbReference type="ChEBI" id="CHEBI:30616"/>
        <dbReference type="ChEBI" id="CHEBI:43474"/>
        <dbReference type="ChEBI" id="CHEBI:456216"/>
        <dbReference type="EC" id="5.6.2.4"/>
    </reaction>
</comment>
<comment type="subunit">
    <text evidence="1">Can form hexamers. Interacts with E2 protein; this interaction increases E1 DNA binding specificity. Interacts with host DNA polymerase subunit POLA2. Interacts with host single stranded DNA-binding protein RPA1. Interacts with host TOP1; this interaction stimulates the enzymatic activity of TOP1.</text>
</comment>
<comment type="subcellular location">
    <subcellularLocation>
        <location evidence="1">Host nucleus</location>
    </subcellularLocation>
</comment>
<comment type="PTM">
    <text evidence="1">Phosphorylated.</text>
</comment>
<comment type="PTM">
    <text evidence="1">Sumoylated.</text>
</comment>
<comment type="similarity">
    <text evidence="1">Belongs to the papillomaviridae E1 protein family.</text>
</comment>
<feature type="chain" id="PRO_0000133170" description="Replication protein E1">
    <location>
        <begin position="1"/>
        <end position="611"/>
    </location>
</feature>
<feature type="domain" description="SF3 helicase" evidence="1">
    <location>
        <begin position="412"/>
        <end position="562"/>
    </location>
</feature>
<feature type="region of interest" description="Disordered" evidence="2">
    <location>
        <begin position="112"/>
        <end position="154"/>
    </location>
</feature>
<feature type="region of interest" description="DNA-binding region" evidence="1">
    <location>
        <begin position="146"/>
        <end position="313"/>
    </location>
</feature>
<feature type="short sequence motif" description="Nuclear localization signal" evidence="1">
    <location>
        <begin position="74"/>
        <end position="76"/>
    </location>
</feature>
<feature type="short sequence motif" description="Nuclear export signal" evidence="1">
    <location>
        <begin position="89"/>
        <end position="98"/>
    </location>
</feature>
<feature type="compositionally biased region" description="Basic and acidic residues" evidence="2">
    <location>
        <begin position="112"/>
        <end position="128"/>
    </location>
</feature>
<feature type="compositionally biased region" description="Low complexity" evidence="2">
    <location>
        <begin position="135"/>
        <end position="146"/>
    </location>
</feature>
<feature type="binding site" evidence="1">
    <location>
        <begin position="438"/>
        <end position="445"/>
    </location>
    <ligand>
        <name>ATP</name>
        <dbReference type="ChEBI" id="CHEBI:30616"/>
    </ligand>
</feature>
<feature type="modified residue" description="Phosphoserine; by host" evidence="1">
    <location>
        <position position="80"/>
    </location>
</feature>
<feature type="modified residue" description="Phosphoserine; by host" evidence="1">
    <location>
        <position position="84"/>
    </location>
</feature>
<feature type="modified residue" description="Phosphoserine; by host" evidence="1">
    <location>
        <position position="90"/>
    </location>
</feature>
<feature type="cross-link" description="Glycyl lysine isopeptide (Lys-Gly) (interchain with G-Cter in SUMO)" evidence="1">
    <location>
        <position position="519"/>
    </location>
</feature>
<organismHost>
    <name type="scientific">Cervus elaphus</name>
    <name type="common">Red deer</name>
    <dbReference type="NCBI Taxonomy" id="9860"/>
</organismHost>
<organismHost>
    <name type="scientific">Rangifer tarandus</name>
    <name type="common">Reindeer</name>
    <name type="synonym">Cervus tarandus</name>
    <dbReference type="NCBI Taxonomy" id="9870"/>
</organismHost>
<keyword id="KW-0067">ATP-binding</keyword>
<keyword id="KW-0235">DNA replication</keyword>
<keyword id="KW-0238">DNA-binding</keyword>
<keyword id="KW-0244">Early protein</keyword>
<keyword id="KW-0347">Helicase</keyword>
<keyword id="KW-1048">Host nucleus</keyword>
<keyword id="KW-0378">Hydrolase</keyword>
<keyword id="KW-0413">Isomerase</keyword>
<keyword id="KW-1017">Isopeptide bond</keyword>
<keyword id="KW-0547">Nucleotide-binding</keyword>
<keyword id="KW-0597">Phosphoprotein</keyword>
<keyword id="KW-1185">Reference proteome</keyword>
<keyword id="KW-0832">Ubl conjugation</keyword>
<organism>
    <name type="scientific">European elk papillomavirus</name>
    <name type="common">EEPV</name>
    <dbReference type="NCBI Taxonomy" id="2885846"/>
    <lineage>
        <taxon>Viruses</taxon>
        <taxon>Monodnaviria</taxon>
        <taxon>Shotokuvirae</taxon>
        <taxon>Cossaviricota</taxon>
        <taxon>Papovaviricetes</taxon>
        <taxon>Zurhausenvirales</taxon>
        <taxon>Papillomaviridae</taxon>
        <taxon>Firstpapillomavirinae</taxon>
        <taxon>Deltapapillomavirus</taxon>
        <taxon>Deltapapillomavirus 1</taxon>
    </lineage>
</organism>
<reference key="1">
    <citation type="journal article" date="1986" name="Gene">
        <title>Organization and expression of the transforming region from the European elk papillomavirus (EEPV).</title>
        <authorList>
            <person name="Ahola H."/>
            <person name="Bergman P."/>
            <person name="Stroem A.C."/>
            <person name="Moreno-Lopez J."/>
            <person name="Petterson U."/>
        </authorList>
    </citation>
    <scope>NUCLEOTIDE SEQUENCE [GENOMIC DNA]</scope>
</reference>
<sequence length="611" mass="68111">MAETAGSSGQGGGAYICFEADCSDSDTEVDSPVQCSDSSDEDLVDNANIVPGNHLELFQTQEKEAGERQISLLKRKFCLSPGTSEVEELSPGLAGIRISPPKRNPVVRRRLFDAGGRDAVRTPRDHEVNSSPEPRSQVQSGSSSRSWEGHLESINEPASDGNMAAVMHKLFKTLYIAGFGEITRVFQSDKTNNNQWVIAAHGASEVLYAASFEILSKHCSYLQASRKVHETGSMSLFLAVFNVGKSRETVRKLISGVLNTPCSRLLLQPPKIRGLCPALFWFKLGLSPATQTHGTTPDWIKQQTNVAYNTGEASKFDFGTMVQWAYDHRLTEECKIAYQYAKCAGTDLNAKAFLASTNQARLVKDCCTMVKHYLRAEEQSLTISAFIKRRCDNATGKGSWLSIMNLLKFQGIEPINFVNALKPWLKGTPKHNCIAIVGPPNSGKSLLCNTLMSFLGGKVLTFANHSSHFWLAPLTDCRVALIDDATHACWRYFDTYLRNVLDGYPVCIDRKHKSAVQLKAPPLLLTSNIDVHADEKYFYLQSRVKTFYFKEPCPASDTGEPLFFITDADWKNFFERLWERLDLSDQEDEVDEDECSQRSFTCSARNTDAMH</sequence>
<accession>P11328</accession>
<evidence type="ECO:0000255" key="1">
    <source>
        <dbReference type="HAMAP-Rule" id="MF_04000"/>
    </source>
</evidence>
<evidence type="ECO:0000256" key="2">
    <source>
        <dbReference type="SAM" id="MobiDB-lite"/>
    </source>
</evidence>
<gene>
    <name evidence="1" type="primary">E1</name>
</gene>
<dbReference type="EC" id="5.6.2.4" evidence="1"/>
<dbReference type="EMBL" id="M15953">
    <property type="protein sequence ID" value="AAA66852.1"/>
    <property type="molecule type" value="Genomic_DNA"/>
</dbReference>
<dbReference type="PIR" id="C29499">
    <property type="entry name" value="W1WLEP"/>
</dbReference>
<dbReference type="RefSeq" id="NP_041304.1">
    <property type="nucleotide sequence ID" value="NC_001524.1"/>
</dbReference>
<dbReference type="SMR" id="P11328"/>
<dbReference type="GeneID" id="1488989"/>
<dbReference type="KEGG" id="vg:1488989"/>
<dbReference type="Proteomes" id="UP000009060">
    <property type="component" value="Genome"/>
</dbReference>
<dbReference type="GO" id="GO:0042025">
    <property type="term" value="C:host cell nucleus"/>
    <property type="evidence" value="ECO:0007669"/>
    <property type="project" value="UniProtKB-SubCell"/>
</dbReference>
<dbReference type="GO" id="GO:0005524">
    <property type="term" value="F:ATP binding"/>
    <property type="evidence" value="ECO:0007669"/>
    <property type="project" value="UniProtKB-UniRule"/>
</dbReference>
<dbReference type="GO" id="GO:0016887">
    <property type="term" value="F:ATP hydrolysis activity"/>
    <property type="evidence" value="ECO:0007669"/>
    <property type="project" value="RHEA"/>
</dbReference>
<dbReference type="GO" id="GO:0003677">
    <property type="term" value="F:DNA binding"/>
    <property type="evidence" value="ECO:0007669"/>
    <property type="project" value="UniProtKB-UniRule"/>
</dbReference>
<dbReference type="GO" id="GO:0003678">
    <property type="term" value="F:DNA helicase activity"/>
    <property type="evidence" value="ECO:0007669"/>
    <property type="project" value="UniProtKB-UniRule"/>
</dbReference>
<dbReference type="GO" id="GO:0006260">
    <property type="term" value="P:DNA replication"/>
    <property type="evidence" value="ECO:0007669"/>
    <property type="project" value="UniProtKB-UniRule"/>
</dbReference>
<dbReference type="Gene3D" id="3.40.1310.10">
    <property type="match status" value="1"/>
</dbReference>
<dbReference type="Gene3D" id="3.40.50.300">
    <property type="entry name" value="P-loop containing nucleotide triphosphate hydrolases"/>
    <property type="match status" value="1"/>
</dbReference>
<dbReference type="Gene3D" id="1.10.10.510">
    <property type="entry name" value="Zinc finger, large T-antigen D1 domain"/>
    <property type="match status" value="1"/>
</dbReference>
<dbReference type="HAMAP" id="MF_04000">
    <property type="entry name" value="PPV_E1"/>
    <property type="match status" value="1"/>
</dbReference>
<dbReference type="InterPro" id="IPR014015">
    <property type="entry name" value="Helicase_SF3_DNA-vir"/>
</dbReference>
<dbReference type="InterPro" id="IPR027417">
    <property type="entry name" value="P-loop_NTPase"/>
</dbReference>
<dbReference type="InterPro" id="IPR001177">
    <property type="entry name" value="PPV_DNA_helicase_E1_C"/>
</dbReference>
<dbReference type="InterPro" id="IPR014000">
    <property type="entry name" value="PPV_DNA_helicase_E1_N"/>
</dbReference>
<dbReference type="InterPro" id="IPR046832">
    <property type="entry name" value="PPV_E1_DBD"/>
</dbReference>
<dbReference type="InterPro" id="IPR046935">
    <property type="entry name" value="PPV_E1_DBD_sf"/>
</dbReference>
<dbReference type="InterPro" id="IPR016393">
    <property type="entry name" value="Rep_E1_papillomaV"/>
</dbReference>
<dbReference type="InterPro" id="IPR037102">
    <property type="entry name" value="Znf_lg_T-Ag_D1_dom_sf"/>
</dbReference>
<dbReference type="Pfam" id="PF00519">
    <property type="entry name" value="PPV_E1_C"/>
    <property type="match status" value="1"/>
</dbReference>
<dbReference type="Pfam" id="PF20450">
    <property type="entry name" value="PPV_E1_DBD"/>
    <property type="match status" value="1"/>
</dbReference>
<dbReference type="Pfam" id="PF00524">
    <property type="entry name" value="PPV_E1_N"/>
    <property type="match status" value="1"/>
</dbReference>
<dbReference type="PIRSF" id="PIRSF003383">
    <property type="entry name" value="Rep_E1_papillomaV"/>
    <property type="match status" value="1"/>
</dbReference>
<dbReference type="SUPFAM" id="SSF55464">
    <property type="entry name" value="Origin of replication-binding domain, RBD-like"/>
    <property type="match status" value="1"/>
</dbReference>
<dbReference type="SUPFAM" id="SSF52540">
    <property type="entry name" value="P-loop containing nucleoside triphosphate hydrolases"/>
    <property type="match status" value="1"/>
</dbReference>
<dbReference type="PROSITE" id="PS51206">
    <property type="entry name" value="SF3_HELICASE_1"/>
    <property type="match status" value="1"/>
</dbReference>
<protein>
    <recommendedName>
        <fullName evidence="1">Replication protein E1</fullName>
        <ecNumber evidence="1">5.6.2.4</ecNumber>
    </recommendedName>
    <alternativeName>
        <fullName evidence="1">ATP-dependent helicase E1</fullName>
    </alternativeName>
    <alternativeName>
        <fullName evidence="1">DNA 3'-5' helicase E1</fullName>
    </alternativeName>
</protein>